<feature type="chain" id="PRO_0000217438" description="Uncharacterized 35.4 kDa protein in rbcL-atpE intergenic region">
    <location>
        <begin position="1"/>
        <end position="295"/>
    </location>
</feature>
<name>YCX7_EUGGR</name>
<accession>P31920</accession>
<proteinExistence type="predicted"/>
<dbReference type="EMBL" id="Z11874">
    <property type="status" value="NOT_ANNOTATED_CDS"/>
    <property type="molecule type" value="Genomic_DNA"/>
</dbReference>
<dbReference type="EMBL" id="X70810">
    <property type="protein sequence ID" value="CAA50125.1"/>
    <property type="molecule type" value="Genomic_DNA"/>
</dbReference>
<dbReference type="PIR" id="S34544">
    <property type="entry name" value="S34544"/>
</dbReference>
<dbReference type="RefSeq" id="NP_041938.1">
    <property type="nucleotide sequence ID" value="NC_001603.2"/>
</dbReference>
<dbReference type="GeneID" id="1457328"/>
<dbReference type="GO" id="GO:0009507">
    <property type="term" value="C:chloroplast"/>
    <property type="evidence" value="ECO:0007669"/>
    <property type="project" value="UniProtKB-SubCell"/>
</dbReference>
<protein>
    <recommendedName>
        <fullName>Uncharacterized 35.4 kDa protein in rbcL-atpE intergenic region</fullName>
    </recommendedName>
    <alternativeName>
        <fullName>ORF295</fullName>
    </alternativeName>
</protein>
<reference key="1">
    <citation type="journal article" date="1993" name="Nucleic Acids Res.">
        <title>Complete sequence of Euglena gracilis chloroplast DNA.</title>
        <authorList>
            <person name="Hallick R.B."/>
            <person name="Hong L."/>
            <person name="Drager R.G."/>
            <person name="Favreau M.R."/>
            <person name="Monfort A."/>
            <person name="Orsat B."/>
            <person name="Spielmann A."/>
            <person name="Stutz E."/>
        </authorList>
    </citation>
    <scope>NUCLEOTIDE SEQUENCE [LARGE SCALE GENOMIC DNA]</scope>
    <source>
        <strain>Z / UTEX 753</strain>
    </source>
</reference>
<keyword id="KW-0150">Chloroplast</keyword>
<keyword id="KW-0934">Plastid</keyword>
<geneLocation type="chloroplast"/>
<sequence length="295" mass="35445">MVQKLRKKYKFKINTTSSRYYGSYNITRNWRILIRTNFQSLIEMDYSFIKKWHAIINDDKISFIMYTICKYVDFQKETDIFIKAYLELKKNCRPKYLEDLFSFDKNTIISIEKAKGDSPGNVGGFIINCRDPEEELFWNRIPRYESKNNNCLSFKFITQYNLIEKARGNYFLPKIFLEVLKKGPEEIDKEKRKTVLAKKIDNDEEIEKIEIKKEKQFEIKSFFEDSEFLAITEKYTKKCEDLININNKGKKIRDLFCNYILELLILEINILNSQSKPKYSDVFICTYKKKRTIMK</sequence>
<organism>
    <name type="scientific">Euglena gracilis</name>
    <dbReference type="NCBI Taxonomy" id="3039"/>
    <lineage>
        <taxon>Eukaryota</taxon>
        <taxon>Discoba</taxon>
        <taxon>Euglenozoa</taxon>
        <taxon>Euglenida</taxon>
        <taxon>Spirocuta</taxon>
        <taxon>Euglenophyceae</taxon>
        <taxon>Euglenales</taxon>
        <taxon>Euglenaceae</taxon>
        <taxon>Euglena</taxon>
    </lineage>
</organism>
<comment type="subcellular location">
    <subcellularLocation>
        <location>Plastid</location>
        <location>Chloroplast</location>
    </subcellularLocation>
</comment>